<feature type="transit peptide" description="Chloroplast">
    <location>
        <begin position="1"/>
        <end position="44"/>
    </location>
</feature>
<feature type="chain" id="PRO_0000029389" description="Photosystem I reaction center subunit V, chloroplastic">
    <location>
        <begin position="45"/>
        <end position="143"/>
    </location>
</feature>
<feature type="transmembrane region" description="Helical" evidence="1">
    <location>
        <begin position="50"/>
        <end position="70"/>
    </location>
</feature>
<feature type="transmembrane region" description="Helical" evidence="1">
    <location>
        <begin position="112"/>
        <end position="132"/>
    </location>
</feature>
<reference key="1">
    <citation type="journal article" date="1992" name="Plant Mol. Biol.">
        <title>A cDNA clone from barley encoding the precursor from the photosystem I polypeptide PSI-G: sequence similarity to PSI-K.</title>
        <authorList>
            <person name="Okkels J."/>
            <person name="Nielsen V."/>
            <person name="Scheller H."/>
            <person name="Moeller B.L."/>
        </authorList>
    </citation>
    <scope>NUCLEOTIDE SEQUENCE [GENOMIC DNA]</scope>
    <source>
        <tissue>Seedling leaf</tissue>
    </source>
</reference>
<reference key="2">
    <citation type="journal article" date="1991" name="J. Biol. Chem.">
        <title>Isolation and characterization of a cDNA clone encoding an 18-kDa hydrophobic photosystem I subunit (PSI-L) from barley (Hordeum vulgare L.).</title>
        <authorList>
            <person name="Okkels J.S."/>
            <person name="Scheller H.V."/>
            <person name="Svendsen I."/>
            <person name="Moeller B.L."/>
        </authorList>
    </citation>
    <scope>PROTEIN SEQUENCE OF 135-139</scope>
    <source>
        <strain>cv. Svalofs Bonus</strain>
    </source>
</reference>
<sequence>MATSTAAVLSPPAVAGLRLAPSPRAAASFRGVSPPARRSVAARAALEPSVVISLSTGLSLVMGRFVFFNFQRENVAKQVPEQNGKTHFEAGDERAKEFAGILKSNDPVGFNLVDVLAWGSIGHIVAYYILATTSNGYDPPFFG</sequence>
<accession>Q00327</accession>
<name>PSAG_HORVU</name>
<evidence type="ECO:0000255" key="1"/>
<evidence type="ECO:0000305" key="2"/>
<proteinExistence type="evidence at protein level"/>
<keyword id="KW-0150">Chloroplast</keyword>
<keyword id="KW-0903">Direct protein sequencing</keyword>
<keyword id="KW-0472">Membrane</keyword>
<keyword id="KW-0602">Photosynthesis</keyword>
<keyword id="KW-0603">Photosystem I</keyword>
<keyword id="KW-0934">Plastid</keyword>
<keyword id="KW-0793">Thylakoid</keyword>
<keyword id="KW-0809">Transit peptide</keyword>
<keyword id="KW-0812">Transmembrane</keyword>
<keyword id="KW-1133">Transmembrane helix</keyword>
<gene>
    <name type="primary">PSAG</name>
</gene>
<dbReference type="EMBL" id="X60158">
    <property type="protein sequence ID" value="CAA42727.1"/>
    <property type="molecule type" value="Genomic_DNA"/>
</dbReference>
<dbReference type="PIR" id="S20937">
    <property type="entry name" value="S20937"/>
</dbReference>
<dbReference type="SMR" id="Q00327"/>
<dbReference type="OMA" id="AYWILAT"/>
<dbReference type="ExpressionAtlas" id="Q00327">
    <property type="expression patterns" value="baseline and differential"/>
</dbReference>
<dbReference type="GO" id="GO:0009535">
    <property type="term" value="C:chloroplast thylakoid membrane"/>
    <property type="evidence" value="ECO:0007669"/>
    <property type="project" value="UniProtKB-SubCell"/>
</dbReference>
<dbReference type="GO" id="GO:0009522">
    <property type="term" value="C:photosystem I"/>
    <property type="evidence" value="ECO:0007669"/>
    <property type="project" value="UniProtKB-KW"/>
</dbReference>
<dbReference type="GO" id="GO:0015979">
    <property type="term" value="P:photosynthesis"/>
    <property type="evidence" value="ECO:0007669"/>
    <property type="project" value="UniProtKB-KW"/>
</dbReference>
<dbReference type="Gene3D" id="1.10.286.40">
    <property type="entry name" value="Chlorophyll a-b binding protein like"/>
    <property type="match status" value="1"/>
</dbReference>
<dbReference type="InterPro" id="IPR017494">
    <property type="entry name" value="PSI_PsaG"/>
</dbReference>
<dbReference type="InterPro" id="IPR000549">
    <property type="entry name" value="PSI_PsaG/PsaK"/>
</dbReference>
<dbReference type="InterPro" id="IPR023618">
    <property type="entry name" value="PSI_PsaG/PsaK_dom"/>
</dbReference>
<dbReference type="InterPro" id="IPR016370">
    <property type="entry name" value="PSI_PsaG/PsaK_pln"/>
</dbReference>
<dbReference type="NCBIfam" id="TIGR03051">
    <property type="entry name" value="PS_I_psaG_plant"/>
    <property type="match status" value="1"/>
</dbReference>
<dbReference type="PANTHER" id="PTHR34195:SF1">
    <property type="entry name" value="PHOTOSYSTEM I REACTION CENTER SUBUNIT V, CHLOROPLASTIC"/>
    <property type="match status" value="1"/>
</dbReference>
<dbReference type="PANTHER" id="PTHR34195">
    <property type="entry name" value="PHOTOSYSTEM I REACTION CENTER SUBUNIT V, CHLOROPLASTIC-RELATED"/>
    <property type="match status" value="1"/>
</dbReference>
<dbReference type="Pfam" id="PF01241">
    <property type="entry name" value="PSI_PSAK"/>
    <property type="match status" value="1"/>
</dbReference>
<dbReference type="PIRSF" id="PIRSF002912">
    <property type="entry name" value="PSI_PsaK"/>
    <property type="match status" value="1"/>
</dbReference>
<dbReference type="PROSITE" id="PS01026">
    <property type="entry name" value="PHOTOSYSTEM_I_PSAGK"/>
    <property type="match status" value="1"/>
</dbReference>
<organism>
    <name type="scientific">Hordeum vulgare</name>
    <name type="common">Barley</name>
    <dbReference type="NCBI Taxonomy" id="4513"/>
    <lineage>
        <taxon>Eukaryota</taxon>
        <taxon>Viridiplantae</taxon>
        <taxon>Streptophyta</taxon>
        <taxon>Embryophyta</taxon>
        <taxon>Tracheophyta</taxon>
        <taxon>Spermatophyta</taxon>
        <taxon>Magnoliopsida</taxon>
        <taxon>Liliopsida</taxon>
        <taxon>Poales</taxon>
        <taxon>Poaceae</taxon>
        <taxon>BOP clade</taxon>
        <taxon>Pooideae</taxon>
        <taxon>Triticodae</taxon>
        <taxon>Triticeae</taxon>
        <taxon>Hordeinae</taxon>
        <taxon>Hordeum</taxon>
    </lineage>
</organism>
<protein>
    <recommendedName>
        <fullName>Photosystem I reaction center subunit V, chloroplastic</fullName>
    </recommendedName>
    <alternativeName>
        <fullName>PSI-G</fullName>
    </alternativeName>
    <alternativeName>
        <fullName>Photosystem I 9 kDa protein</fullName>
    </alternativeName>
</protein>
<comment type="function">
    <text>Not yet known.</text>
</comment>
<comment type="subcellular location">
    <subcellularLocation>
        <location evidence="2">Plastid</location>
        <location evidence="2">Chloroplast thylakoid membrane</location>
        <topology evidence="2">Multi-pass membrane protein</topology>
    </subcellularLocation>
</comment>
<comment type="similarity">
    <text evidence="2">Belongs to the PsaG/PsaK family.</text>
</comment>